<proteinExistence type="evidence at protein level"/>
<feature type="chain" id="PRO_0000341517" description="Unknown protein 4">
    <location>
        <begin position="1" status="less than"/>
        <end position="9" status="greater than"/>
    </location>
</feature>
<feature type="unsure residue" description="Q or K">
    <location>
        <position position="6"/>
    </location>
</feature>
<feature type="non-terminal residue">
    <location>
        <position position="1"/>
    </location>
</feature>
<feature type="non-terminal residue">
    <location>
        <position position="9"/>
    </location>
</feature>
<sequence>GDAAAQPEK</sequence>
<name>UP04_GINBI</name>
<protein>
    <recommendedName>
        <fullName>Unknown protein 4</fullName>
    </recommendedName>
</protein>
<accession>P85402</accession>
<keyword id="KW-0903">Direct protein sequencing</keyword>
<organism>
    <name type="scientific">Ginkgo biloba</name>
    <name type="common">Ginkgo</name>
    <name type="synonym">Maidenhair tree</name>
    <dbReference type="NCBI Taxonomy" id="3311"/>
    <lineage>
        <taxon>Eukaryota</taxon>
        <taxon>Viridiplantae</taxon>
        <taxon>Streptophyta</taxon>
        <taxon>Embryophyta</taxon>
        <taxon>Tracheophyta</taxon>
        <taxon>Spermatophyta</taxon>
        <taxon>Ginkgoidae</taxon>
        <taxon>Ginkgoales</taxon>
        <taxon>Ginkgoaceae</taxon>
        <taxon>Ginkgo</taxon>
    </lineage>
</organism>
<reference key="1">
    <citation type="journal article" date="2009" name="Physiol. Plantarum">
        <title>The presence of sinapyl lignin in Ginkgo biloba cell cultures changes our views of the evolution of lignin biosynthesis.</title>
        <authorList>
            <person name="Novo Uzal E."/>
            <person name="Gomez Ros L.V."/>
            <person name="Pomar F."/>
            <person name="Bernal M.A."/>
            <person name="Paradela A."/>
            <person name="Albar J.P."/>
            <person name="Ros Barcelo A."/>
        </authorList>
    </citation>
    <scope>PROTEIN SEQUENCE</scope>
    <source>
        <strain>PC-650</strain>
        <tissue>Callus</tissue>
    </source>
</reference>